<organism>
    <name type="scientific">Canis lupus familiaris</name>
    <name type="common">Dog</name>
    <name type="synonym">Canis familiaris</name>
    <dbReference type="NCBI Taxonomy" id="9615"/>
    <lineage>
        <taxon>Eukaryota</taxon>
        <taxon>Metazoa</taxon>
        <taxon>Chordata</taxon>
        <taxon>Craniata</taxon>
        <taxon>Vertebrata</taxon>
        <taxon>Euteleostomi</taxon>
        <taxon>Mammalia</taxon>
        <taxon>Eutheria</taxon>
        <taxon>Laurasiatheria</taxon>
        <taxon>Carnivora</taxon>
        <taxon>Caniformia</taxon>
        <taxon>Canidae</taxon>
        <taxon>Canis</taxon>
    </lineage>
</organism>
<accession>P42161</accession>
<accession>A1E294</accession>
<accession>Q9TVA0</accession>
<comment type="function">
    <text evidence="2 3">Type II interferon produced by immune cells such as T-cells and NK cells that plays crucial roles in antimicrobial, antiviral, and antitumor responses by activating effector immune cells and enhancing antigen presentation. Primarily signals through the JAK-STAT pathway after interaction with its receptor IFNGR1 to affect gene regulation. Upon IFNG binding, IFNGR1 intracellular domain opens out to allow association of downstream signaling components JAK2, JAK1 and STAT1, leading to STAT1 activation, nuclear translocation and transcription of IFNG-regulated genes. Many of the induced genes are transcription factors such as IRF1 that are able to further drive regulation of a next wave of transcription. Plays a role in class I antigen presentation pathway by inducing a replacement of catalytic proteasome subunits with immunoproteasome subunits. In turn, increases the quantity, quality, and repertoire of peptides for class I MHC loading. Increases the efficiency of peptide generation also by inducing the expression of activator PA28 that associates with the proteasome and alters its proteolytic cleavage preference. Up-regulates as well MHC II complexes on the cell surface by promoting expression of several key molecules such as cathepsins B/CTSB, H/CTSH, and L/CTSL (By similarity). Participates in the regulation of hematopoietic stem cells during development and under homeostatic conditions by affecting their development, quiescence, and differentiation (By similarity).</text>
</comment>
<comment type="subunit">
    <text evidence="2">Homodimer. Interacts with IFNGR1 (via extracellular domain); this interaction promotes IFNGR1 dimerization.</text>
</comment>
<comment type="subcellular location">
    <subcellularLocation>
        <location evidence="2">Secreted</location>
    </subcellularLocation>
</comment>
<comment type="tissue specificity">
    <text>Released primarily from activated T lymphocytes.</text>
</comment>
<comment type="similarity">
    <text evidence="5">Belongs to the type II (or gamma) interferon family.</text>
</comment>
<evidence type="ECO:0000250" key="1"/>
<evidence type="ECO:0000250" key="2">
    <source>
        <dbReference type="UniProtKB" id="P01579"/>
    </source>
</evidence>
<evidence type="ECO:0000250" key="3">
    <source>
        <dbReference type="UniProtKB" id="P01580"/>
    </source>
</evidence>
<evidence type="ECO:0000255" key="4"/>
<evidence type="ECO:0000305" key="5"/>
<feature type="signal peptide" evidence="1">
    <location>
        <begin position="1"/>
        <end position="23"/>
    </location>
</feature>
<feature type="chain" id="PRO_0000016437" description="Interferon gamma">
    <location>
        <begin position="24"/>
        <end position="166"/>
    </location>
</feature>
<feature type="modified residue" description="Pyrrolidone carboxylic acid" evidence="2">
    <location>
        <position position="24"/>
    </location>
</feature>
<feature type="glycosylation site" description="N-linked (GlcNAc...) asparagine" evidence="4">
    <location>
        <position position="39"/>
    </location>
</feature>
<feature type="glycosylation site" description="N-linked (GlcNAc...) asparagine" evidence="4">
    <location>
        <position position="106"/>
    </location>
</feature>
<feature type="sequence conflict" description="In Ref. 3; AAB22724." evidence="5" ref="3">
    <original>S</original>
    <variation>L</variation>
    <location>
        <position position="19"/>
    </location>
</feature>
<feature type="sequence conflict" description="In Ref. 3; AAB22724." evidence="5" ref="3">
    <original>N</original>
    <variation>Y</variation>
    <location>
        <position position="22"/>
    </location>
</feature>
<proteinExistence type="evidence at transcript level"/>
<reference key="1">
    <citation type="submission" date="1999-02" db="EMBL/GenBank/DDBJ databases">
        <title>Cloning and expression of canine interferon-gamma.</title>
        <authorList>
            <person name="Boroughs K.L."/>
            <person name="Sim G.-K."/>
        </authorList>
    </citation>
    <scope>NUCLEOTIDE SEQUENCE [MRNA]</scope>
</reference>
<reference key="2">
    <citation type="submission" date="2006-11" db="EMBL/GenBank/DDBJ databases">
        <title>Amplification and cloning of canine interferon gamma in mammalian expression vector.</title>
        <authorList>
            <person name="Salunkhe S.S."/>
            <person name="Rai A."/>
            <person name="Saxena A."/>
            <person name="Tiwari A.K."/>
            <person name="Ravindra P.V."/>
            <person name="Sandey M."/>
            <person name="Gupta P.K."/>
        </authorList>
    </citation>
    <scope>NUCLEOTIDE SEQUENCE [MRNA]</scope>
</reference>
<reference key="3">
    <citation type="journal article" date="1992" name="J. Interferon Res.">
        <title>Cloning of the cDNA for canine interferon-gamma.</title>
        <authorList>
            <person name="Zucker K."/>
            <person name="Lu P."/>
            <person name="Esquenazi V."/>
            <person name="Miller J."/>
        </authorList>
    </citation>
    <scope>NUCLEOTIDE SEQUENCE [MRNA] OF 18-166</scope>
    <source>
        <tissue>Lymphocyte</tissue>
    </source>
</reference>
<dbReference type="EMBL" id="AF126247">
    <property type="protein sequence ID" value="AAD31423.1"/>
    <property type="molecule type" value="mRNA"/>
</dbReference>
<dbReference type="EMBL" id="EF095772">
    <property type="protein sequence ID" value="ABL01503.1"/>
    <property type="molecule type" value="mRNA"/>
</dbReference>
<dbReference type="EMBL" id="S41201">
    <property type="protein sequence ID" value="AAB22724.2"/>
    <property type="molecule type" value="mRNA"/>
</dbReference>
<dbReference type="RefSeq" id="NP_001003174.1">
    <property type="nucleotide sequence ID" value="NM_001003174.1"/>
</dbReference>
<dbReference type="SMR" id="P42161"/>
<dbReference type="FunCoup" id="P42161">
    <property type="interactions" value="151"/>
</dbReference>
<dbReference type="STRING" id="9615.ENSCAFP00000000588"/>
<dbReference type="GlyCosmos" id="P42161">
    <property type="glycosylation" value="2 sites, No reported glycans"/>
</dbReference>
<dbReference type="PaxDb" id="9612-ENSCAFP00000000588"/>
<dbReference type="Ensembl" id="ENSCAFT00000000643.5">
    <property type="protein sequence ID" value="ENSCAFP00000000588.3"/>
    <property type="gene ID" value="ENSCAFG00000000408.5"/>
</dbReference>
<dbReference type="Ensembl" id="ENSCAFT00030018940.1">
    <property type="protein sequence ID" value="ENSCAFP00030016532.1"/>
    <property type="gene ID" value="ENSCAFG00030010221.1"/>
</dbReference>
<dbReference type="Ensembl" id="ENSCAFT00040042312.1">
    <property type="protein sequence ID" value="ENSCAFP00040036908.1"/>
    <property type="gene ID" value="ENSCAFG00040022768.1"/>
</dbReference>
<dbReference type="Ensembl" id="ENSCAFT00845024391.1">
    <property type="protein sequence ID" value="ENSCAFP00845019173.1"/>
    <property type="gene ID" value="ENSCAFG00845013680.1"/>
</dbReference>
<dbReference type="GeneID" id="403801"/>
<dbReference type="KEGG" id="cfa:403801"/>
<dbReference type="CTD" id="3458"/>
<dbReference type="VEuPathDB" id="HostDB:ENSCAFG00845013680"/>
<dbReference type="VGNC" id="VGNC:41879">
    <property type="gene designation" value="IFNG"/>
</dbReference>
<dbReference type="eggNOG" id="ENOG502SBGW">
    <property type="taxonomic scope" value="Eukaryota"/>
</dbReference>
<dbReference type="GeneTree" id="ENSGT00390000007831"/>
<dbReference type="HOGENOM" id="CLU_135106_0_0_1"/>
<dbReference type="InParanoid" id="P42161"/>
<dbReference type="OMA" id="QIVSMYL"/>
<dbReference type="OrthoDB" id="9937106at2759"/>
<dbReference type="TreeFam" id="TF336308"/>
<dbReference type="Reactome" id="R-CFA-877300">
    <property type="pathway name" value="Interferon gamma signaling"/>
</dbReference>
<dbReference type="Reactome" id="R-CFA-877312">
    <property type="pathway name" value="Regulation of IFNG signaling"/>
</dbReference>
<dbReference type="Reactome" id="R-CFA-9732724">
    <property type="pathway name" value="IFNG signaling activates MAPKs"/>
</dbReference>
<dbReference type="Proteomes" id="UP000002254">
    <property type="component" value="Chromosome 10"/>
</dbReference>
<dbReference type="Proteomes" id="UP000694429">
    <property type="component" value="Chromosome 10"/>
</dbReference>
<dbReference type="Proteomes" id="UP000694542">
    <property type="component" value="Chromosome 10"/>
</dbReference>
<dbReference type="Proteomes" id="UP000805418">
    <property type="component" value="Chromosome 10"/>
</dbReference>
<dbReference type="Bgee" id="ENSCAFG00000000408">
    <property type="expression patterns" value="Expressed in jejunum and 19 other cell types or tissues"/>
</dbReference>
<dbReference type="GO" id="GO:0005615">
    <property type="term" value="C:extracellular space"/>
    <property type="evidence" value="ECO:0000318"/>
    <property type="project" value="GO_Central"/>
</dbReference>
<dbReference type="GO" id="GO:0005125">
    <property type="term" value="F:cytokine activity"/>
    <property type="evidence" value="ECO:0000318"/>
    <property type="project" value="GO_Central"/>
</dbReference>
<dbReference type="GO" id="GO:0005133">
    <property type="term" value="F:type II interferon receptor binding"/>
    <property type="evidence" value="ECO:0007669"/>
    <property type="project" value="InterPro"/>
</dbReference>
<dbReference type="GO" id="GO:0002250">
    <property type="term" value="P:adaptive immune response"/>
    <property type="evidence" value="ECO:0000318"/>
    <property type="project" value="GO_Central"/>
</dbReference>
<dbReference type="GO" id="GO:0048143">
    <property type="term" value="P:astrocyte activation"/>
    <property type="evidence" value="ECO:0007669"/>
    <property type="project" value="Ensembl"/>
</dbReference>
<dbReference type="GO" id="GO:0097696">
    <property type="term" value="P:cell surface receptor signaling pathway via STAT"/>
    <property type="evidence" value="ECO:0007669"/>
    <property type="project" value="Ensembl"/>
</dbReference>
<dbReference type="GO" id="GO:0051607">
    <property type="term" value="P:defense response to virus"/>
    <property type="evidence" value="ECO:0007669"/>
    <property type="project" value="UniProtKB-KW"/>
</dbReference>
<dbReference type="GO" id="GO:0097191">
    <property type="term" value="P:extrinsic apoptotic signaling pathway"/>
    <property type="evidence" value="ECO:0007669"/>
    <property type="project" value="Ensembl"/>
</dbReference>
<dbReference type="GO" id="GO:0038096">
    <property type="term" value="P:Fc-gamma receptor signaling pathway involved in phagocytosis"/>
    <property type="evidence" value="ECO:0007669"/>
    <property type="project" value="Ensembl"/>
</dbReference>
<dbReference type="GO" id="GO:0006959">
    <property type="term" value="P:humoral immune response"/>
    <property type="evidence" value="ECO:0000318"/>
    <property type="project" value="GO_Central"/>
</dbReference>
<dbReference type="GO" id="GO:0002281">
    <property type="term" value="P:macrophage activation involved in immune response"/>
    <property type="evidence" value="ECO:0007669"/>
    <property type="project" value="Ensembl"/>
</dbReference>
<dbReference type="GO" id="GO:0030225">
    <property type="term" value="P:macrophage differentiation"/>
    <property type="evidence" value="ECO:0007669"/>
    <property type="project" value="Ensembl"/>
</dbReference>
<dbReference type="GO" id="GO:0001774">
    <property type="term" value="P:microglial cell activation"/>
    <property type="evidence" value="ECO:0007669"/>
    <property type="project" value="Ensembl"/>
</dbReference>
<dbReference type="GO" id="GO:0045892">
    <property type="term" value="P:negative regulation of DNA-templated transcription"/>
    <property type="evidence" value="ECO:0007669"/>
    <property type="project" value="Ensembl"/>
</dbReference>
<dbReference type="GO" id="GO:0032700">
    <property type="term" value="P:negative regulation of interleukin-17 production"/>
    <property type="evidence" value="ECO:0007669"/>
    <property type="project" value="Ensembl"/>
</dbReference>
<dbReference type="GO" id="GO:0048662">
    <property type="term" value="P:negative regulation of smooth muscle cell proliferation"/>
    <property type="evidence" value="ECO:0007669"/>
    <property type="project" value="Ensembl"/>
</dbReference>
<dbReference type="GO" id="GO:1902004">
    <property type="term" value="P:positive regulation of amyloid-beta formation"/>
    <property type="evidence" value="ECO:0007669"/>
    <property type="project" value="Ensembl"/>
</dbReference>
<dbReference type="GO" id="GO:0010508">
    <property type="term" value="P:positive regulation of autophagy"/>
    <property type="evidence" value="ECO:0000250"/>
    <property type="project" value="UniProtKB"/>
</dbReference>
<dbReference type="GO" id="GO:0032834">
    <property type="term" value="P:positive regulation of CD4-positive, CD25-positive, alpha-beta regulatory T cell differentiation involved in immune response"/>
    <property type="evidence" value="ECO:0007669"/>
    <property type="project" value="Ensembl"/>
</dbReference>
<dbReference type="GO" id="GO:0032722">
    <property type="term" value="P:positive regulation of chemokine production"/>
    <property type="evidence" value="ECO:0007669"/>
    <property type="project" value="Ensembl"/>
</dbReference>
<dbReference type="GO" id="GO:0010634">
    <property type="term" value="P:positive regulation of epithelial cell migration"/>
    <property type="evidence" value="ECO:0007669"/>
    <property type="project" value="Ensembl"/>
</dbReference>
<dbReference type="GO" id="GO:0060552">
    <property type="term" value="P:positive regulation of fructose 1,6-bisphosphate metabolic process"/>
    <property type="evidence" value="ECO:0007669"/>
    <property type="project" value="Ensembl"/>
</dbReference>
<dbReference type="GO" id="GO:0050729">
    <property type="term" value="P:positive regulation of inflammatory response"/>
    <property type="evidence" value="ECO:0007669"/>
    <property type="project" value="Ensembl"/>
</dbReference>
<dbReference type="GO" id="GO:0032735">
    <property type="term" value="P:positive regulation of interleukin-12 production"/>
    <property type="evidence" value="ECO:0007669"/>
    <property type="project" value="Ensembl"/>
</dbReference>
<dbReference type="GO" id="GO:0032747">
    <property type="term" value="P:positive regulation of interleukin-23 production"/>
    <property type="evidence" value="ECO:0007669"/>
    <property type="project" value="Ensembl"/>
</dbReference>
<dbReference type="GO" id="GO:0032755">
    <property type="term" value="P:positive regulation of interleukin-6 production"/>
    <property type="evidence" value="ECO:0007669"/>
    <property type="project" value="Ensembl"/>
</dbReference>
<dbReference type="GO" id="GO:0051044">
    <property type="term" value="P:positive regulation of membrane protein ectodomain proteolysis"/>
    <property type="evidence" value="ECO:0007669"/>
    <property type="project" value="Ensembl"/>
</dbReference>
<dbReference type="GO" id="GO:0050769">
    <property type="term" value="P:positive regulation of neurogenesis"/>
    <property type="evidence" value="ECO:0007669"/>
    <property type="project" value="Ensembl"/>
</dbReference>
<dbReference type="GO" id="GO:0045429">
    <property type="term" value="P:positive regulation of nitric oxide biosynthetic process"/>
    <property type="evidence" value="ECO:0007669"/>
    <property type="project" value="Ensembl"/>
</dbReference>
<dbReference type="GO" id="GO:0045672">
    <property type="term" value="P:positive regulation of osteoclast differentiation"/>
    <property type="evidence" value="ECO:0007669"/>
    <property type="project" value="Ensembl"/>
</dbReference>
<dbReference type="GO" id="GO:0042307">
    <property type="term" value="P:positive regulation of protein import into nucleus"/>
    <property type="evidence" value="ECO:0007669"/>
    <property type="project" value="Ensembl"/>
</dbReference>
<dbReference type="GO" id="GO:0031334">
    <property type="term" value="P:positive regulation of protein-containing complex assembly"/>
    <property type="evidence" value="ECO:0007669"/>
    <property type="project" value="Ensembl"/>
</dbReference>
<dbReference type="GO" id="GO:0034393">
    <property type="term" value="P:positive regulation of smooth muscle cell apoptotic process"/>
    <property type="evidence" value="ECO:0007669"/>
    <property type="project" value="Ensembl"/>
</dbReference>
<dbReference type="GO" id="GO:2000309">
    <property type="term" value="P:positive regulation of tumor necrosis factor (ligand) superfamily member 11 production"/>
    <property type="evidence" value="ECO:0007669"/>
    <property type="project" value="Ensembl"/>
</dbReference>
<dbReference type="GO" id="GO:0060557">
    <property type="term" value="P:positive regulation of vitamin D biosynthetic process"/>
    <property type="evidence" value="ECO:0007669"/>
    <property type="project" value="Ensembl"/>
</dbReference>
<dbReference type="GO" id="GO:0050796">
    <property type="term" value="P:regulation of insulin secretion"/>
    <property type="evidence" value="ECO:0007669"/>
    <property type="project" value="Ensembl"/>
</dbReference>
<dbReference type="GO" id="GO:0060333">
    <property type="term" value="P:type II interferon-mediated signaling pathway"/>
    <property type="evidence" value="ECO:0007669"/>
    <property type="project" value="Ensembl"/>
</dbReference>
<dbReference type="GO" id="GO:0038196">
    <property type="term" value="P:type III interferon-mediated signaling pathway"/>
    <property type="evidence" value="ECO:0007669"/>
    <property type="project" value="Ensembl"/>
</dbReference>
<dbReference type="FunFam" id="1.20.1250.10:FF:000007">
    <property type="entry name" value="Interferon gamma"/>
    <property type="match status" value="1"/>
</dbReference>
<dbReference type="Gene3D" id="1.20.1250.10">
    <property type="match status" value="1"/>
</dbReference>
<dbReference type="InterPro" id="IPR009079">
    <property type="entry name" value="4_helix_cytokine-like_core"/>
</dbReference>
<dbReference type="InterPro" id="IPR002069">
    <property type="entry name" value="Interferon_gamma"/>
</dbReference>
<dbReference type="PANTHER" id="PTHR11419">
    <property type="entry name" value="INTERFERON GAMMA"/>
    <property type="match status" value="1"/>
</dbReference>
<dbReference type="PANTHER" id="PTHR11419:SF0">
    <property type="entry name" value="INTERFERON GAMMA"/>
    <property type="match status" value="1"/>
</dbReference>
<dbReference type="Pfam" id="PF00714">
    <property type="entry name" value="IFN-gamma"/>
    <property type="match status" value="1"/>
</dbReference>
<dbReference type="PIRSF" id="PIRSF001936">
    <property type="entry name" value="IFN-gamma"/>
    <property type="match status" value="1"/>
</dbReference>
<dbReference type="SUPFAM" id="SSF47266">
    <property type="entry name" value="4-helical cytokines"/>
    <property type="match status" value="1"/>
</dbReference>
<gene>
    <name type="primary">IFNG</name>
</gene>
<sequence>MNYTSYILAFQLCVILCSSGCNCQAMFFKEIENLKEYFNASNPDVSDGGSLFVDILKKWREESDKTIIQSQIVSFYLKLFDNFKDNQIIQRSMDTIKEDMLGKFLNSSTSKREDFLKLIQIPVNDLQVQRKAINELIKVMNDLSPRSNLRKRKRSQNLFRGRRASK</sequence>
<protein>
    <recommendedName>
        <fullName>Interferon gamma</fullName>
        <shortName>IFN-gamma</shortName>
    </recommendedName>
</protein>
<keyword id="KW-0051">Antiviral defense</keyword>
<keyword id="KW-0202">Cytokine</keyword>
<keyword id="KW-0325">Glycoprotein</keyword>
<keyword id="KW-0341">Growth regulation</keyword>
<keyword id="KW-0873">Pyrrolidone carboxylic acid</keyword>
<keyword id="KW-1185">Reference proteome</keyword>
<keyword id="KW-0964">Secreted</keyword>
<keyword id="KW-0732">Signal</keyword>
<name>IFNG_CANLF</name>